<comment type="function">
    <text evidence="2">Component of the ubiquinol-cytochrome c reductase complex (complex III or cytochrome b-c1 complex) that is part of the mitochondrial respiratory chain. The b-c1 complex mediates electron transfer from ubiquinol to cytochrome c. Contributes to the generation of a proton gradient across the mitochondrial membrane that is then used for ATP synthesis.</text>
</comment>
<comment type="cofactor">
    <cofactor evidence="2">
        <name>heme b</name>
        <dbReference type="ChEBI" id="CHEBI:60344"/>
    </cofactor>
    <text evidence="2">Binds 2 heme b groups non-covalently.</text>
</comment>
<comment type="subunit">
    <text evidence="2">The cytochrome bc1 complex contains 11 subunits: 3 respiratory subunits (MT-CYB, CYC1 and UQCRFS1), 2 core proteins (UQCRC1 and UQCRC2) and 6 low-molecular weight proteins (UQCRH/QCR6, UQCRB/QCR7, UQCRQ/QCR8, UQCR10/QCR9, UQCR11/QCR10 and a cleavage product of UQCRFS1). This cytochrome bc1 complex then forms a dimer.</text>
</comment>
<comment type="subcellular location">
    <subcellularLocation>
        <location evidence="2">Mitochondrion inner membrane</location>
        <topology evidence="2">Multi-pass membrane protein</topology>
    </subcellularLocation>
</comment>
<comment type="miscellaneous">
    <text evidence="1">Heme 1 (or BL or b562) is low-potential and absorbs at about 562 nm, and heme 2 (or BH or b566) is high-potential and absorbs at about 566 nm.</text>
</comment>
<comment type="similarity">
    <text evidence="3 4">Belongs to the cytochrome b family.</text>
</comment>
<comment type="caution">
    <text evidence="2">The full-length protein contains only eight transmembrane helices, not nine as predicted by bioinformatics tools.</text>
</comment>
<reference key="1">
    <citation type="journal article" date="2003" name="Biol. J. Linn. Soc. Lond.">
        <title>Molecular phylogeny of the endemic Philippine rodent Apomys (Muridae) and the dynamics of diversification in an oceanic archipelago.</title>
        <authorList>
            <person name="Steppan S.J."/>
            <person name="Zawadzki C."/>
            <person name="Heaney L.R."/>
        </authorList>
    </citation>
    <scope>NUCLEOTIDE SEQUENCE [GENOMIC DNA]</scope>
</reference>
<sequence>MTNIRKTHPLIKIINHSFIDLPAPSNISSWWNFGSLLGLCLIIQIITGLFLAMHYTSDTTTAFSSVTHICRDVNYGWLIRYMHANGASMFFICLFIHIGRGIYYGSYTFMETWNIGVILLFAVMATAFMGYVLPWGQMSFWGATVITNLLSAIPYIGTTLVEWIWGGFSVDKATLTRFFAFHFILPFIIAALVIVHLLFLHETGSNNPTGLDSDADKIPFHPYYTIKDLLGVFLLILFLMTLVLFFPDLLGDPDNYTPANPLNTPPHIKPEWYFLFAYAILRSIPNKLGGVLALILSILILAFMPFLHTSKQRSLMFRPITQVLYWMLVANLLVLTWIGGQPVEHPFVIIGQLASISYFSIILILMPISGIIEDKLLKWSL</sequence>
<dbReference type="EMBL" id="AY324470">
    <property type="protein sequence ID" value="AAP88715.2"/>
    <property type="molecule type" value="Genomic_DNA"/>
</dbReference>
<dbReference type="EMBL" id="AY324471">
    <property type="protein sequence ID" value="AAP88716.2"/>
    <property type="molecule type" value="Genomic_DNA"/>
</dbReference>
<dbReference type="EMBL" id="AY324472">
    <property type="protein sequence ID" value="AAP88717.2"/>
    <property type="molecule type" value="Genomic_DNA"/>
</dbReference>
<dbReference type="EMBL" id="AY324473">
    <property type="protein sequence ID" value="AAP88718.2"/>
    <property type="molecule type" value="Genomic_DNA"/>
</dbReference>
<dbReference type="SMR" id="Q7Y778"/>
<dbReference type="GO" id="GO:0005743">
    <property type="term" value="C:mitochondrial inner membrane"/>
    <property type="evidence" value="ECO:0007669"/>
    <property type="project" value="UniProtKB-SubCell"/>
</dbReference>
<dbReference type="GO" id="GO:0045275">
    <property type="term" value="C:respiratory chain complex III"/>
    <property type="evidence" value="ECO:0007669"/>
    <property type="project" value="InterPro"/>
</dbReference>
<dbReference type="GO" id="GO:0046872">
    <property type="term" value="F:metal ion binding"/>
    <property type="evidence" value="ECO:0007669"/>
    <property type="project" value="UniProtKB-KW"/>
</dbReference>
<dbReference type="GO" id="GO:0008121">
    <property type="term" value="F:ubiquinol-cytochrome-c reductase activity"/>
    <property type="evidence" value="ECO:0007669"/>
    <property type="project" value="InterPro"/>
</dbReference>
<dbReference type="GO" id="GO:0006122">
    <property type="term" value="P:mitochondrial electron transport, ubiquinol to cytochrome c"/>
    <property type="evidence" value="ECO:0007669"/>
    <property type="project" value="TreeGrafter"/>
</dbReference>
<dbReference type="CDD" id="cd00290">
    <property type="entry name" value="cytochrome_b_C"/>
    <property type="match status" value="1"/>
</dbReference>
<dbReference type="CDD" id="cd00284">
    <property type="entry name" value="Cytochrome_b_N"/>
    <property type="match status" value="1"/>
</dbReference>
<dbReference type="FunFam" id="1.20.810.10:FF:000002">
    <property type="entry name" value="Cytochrome b"/>
    <property type="match status" value="1"/>
</dbReference>
<dbReference type="Gene3D" id="1.20.810.10">
    <property type="entry name" value="Cytochrome Bc1 Complex, Chain C"/>
    <property type="match status" value="1"/>
</dbReference>
<dbReference type="InterPro" id="IPR005798">
    <property type="entry name" value="Cyt_b/b6_C"/>
</dbReference>
<dbReference type="InterPro" id="IPR036150">
    <property type="entry name" value="Cyt_b/b6_C_sf"/>
</dbReference>
<dbReference type="InterPro" id="IPR005797">
    <property type="entry name" value="Cyt_b/b6_N"/>
</dbReference>
<dbReference type="InterPro" id="IPR027387">
    <property type="entry name" value="Cytb/b6-like_sf"/>
</dbReference>
<dbReference type="InterPro" id="IPR030689">
    <property type="entry name" value="Cytochrome_b"/>
</dbReference>
<dbReference type="InterPro" id="IPR048260">
    <property type="entry name" value="Cytochrome_b_C_euk/bac"/>
</dbReference>
<dbReference type="InterPro" id="IPR048259">
    <property type="entry name" value="Cytochrome_b_N_euk/bac"/>
</dbReference>
<dbReference type="InterPro" id="IPR016174">
    <property type="entry name" value="Di-haem_cyt_TM"/>
</dbReference>
<dbReference type="PANTHER" id="PTHR19271">
    <property type="entry name" value="CYTOCHROME B"/>
    <property type="match status" value="1"/>
</dbReference>
<dbReference type="PANTHER" id="PTHR19271:SF16">
    <property type="entry name" value="CYTOCHROME B"/>
    <property type="match status" value="1"/>
</dbReference>
<dbReference type="Pfam" id="PF00032">
    <property type="entry name" value="Cytochrom_B_C"/>
    <property type="match status" value="1"/>
</dbReference>
<dbReference type="Pfam" id="PF00033">
    <property type="entry name" value="Cytochrome_B"/>
    <property type="match status" value="1"/>
</dbReference>
<dbReference type="PIRSF" id="PIRSF038885">
    <property type="entry name" value="COB"/>
    <property type="match status" value="1"/>
</dbReference>
<dbReference type="SUPFAM" id="SSF81648">
    <property type="entry name" value="a domain/subunit of cytochrome bc1 complex (Ubiquinol-cytochrome c reductase)"/>
    <property type="match status" value="1"/>
</dbReference>
<dbReference type="SUPFAM" id="SSF81342">
    <property type="entry name" value="Transmembrane di-heme cytochromes"/>
    <property type="match status" value="1"/>
</dbReference>
<dbReference type="PROSITE" id="PS51003">
    <property type="entry name" value="CYTB_CTER"/>
    <property type="match status" value="1"/>
</dbReference>
<dbReference type="PROSITE" id="PS51002">
    <property type="entry name" value="CYTB_NTER"/>
    <property type="match status" value="1"/>
</dbReference>
<proteinExistence type="inferred from homology"/>
<accession>Q7Y778</accession>
<protein>
    <recommendedName>
        <fullName>Cytochrome b</fullName>
    </recommendedName>
    <alternativeName>
        <fullName>Complex III subunit 3</fullName>
    </alternativeName>
    <alternativeName>
        <fullName>Complex III subunit III</fullName>
    </alternativeName>
    <alternativeName>
        <fullName>Cytochrome b-c1 complex subunit 3</fullName>
    </alternativeName>
    <alternativeName>
        <fullName>Ubiquinol-cytochrome-c reductase complex cytochrome b subunit</fullName>
    </alternativeName>
</protein>
<gene>
    <name type="primary">MT-CYB</name>
    <name type="synonym">COB</name>
    <name type="synonym">CYTB</name>
    <name type="synonym">MTCYB</name>
</gene>
<geneLocation type="mitochondrion"/>
<name>CYB_APOIN</name>
<organism>
    <name type="scientific">Apomys insignis</name>
    <name type="common">Mindanao montane forest mouse</name>
    <dbReference type="NCBI Taxonomy" id="238005"/>
    <lineage>
        <taxon>Eukaryota</taxon>
        <taxon>Metazoa</taxon>
        <taxon>Chordata</taxon>
        <taxon>Craniata</taxon>
        <taxon>Vertebrata</taxon>
        <taxon>Euteleostomi</taxon>
        <taxon>Mammalia</taxon>
        <taxon>Eutheria</taxon>
        <taxon>Euarchontoglires</taxon>
        <taxon>Glires</taxon>
        <taxon>Rodentia</taxon>
        <taxon>Myomorpha</taxon>
        <taxon>Muroidea</taxon>
        <taxon>Muridae</taxon>
        <taxon>Murinae</taxon>
        <taxon>Apomys</taxon>
    </lineage>
</organism>
<evidence type="ECO:0000250" key="1"/>
<evidence type="ECO:0000250" key="2">
    <source>
        <dbReference type="UniProtKB" id="P00157"/>
    </source>
</evidence>
<evidence type="ECO:0000255" key="3">
    <source>
        <dbReference type="PROSITE-ProRule" id="PRU00967"/>
    </source>
</evidence>
<evidence type="ECO:0000255" key="4">
    <source>
        <dbReference type="PROSITE-ProRule" id="PRU00968"/>
    </source>
</evidence>
<keyword id="KW-0249">Electron transport</keyword>
<keyword id="KW-0349">Heme</keyword>
<keyword id="KW-0408">Iron</keyword>
<keyword id="KW-0472">Membrane</keyword>
<keyword id="KW-0479">Metal-binding</keyword>
<keyword id="KW-0496">Mitochondrion</keyword>
<keyword id="KW-0999">Mitochondrion inner membrane</keyword>
<keyword id="KW-0679">Respiratory chain</keyword>
<keyword id="KW-0812">Transmembrane</keyword>
<keyword id="KW-1133">Transmembrane helix</keyword>
<keyword id="KW-0813">Transport</keyword>
<keyword id="KW-0830">Ubiquinone</keyword>
<feature type="chain" id="PRO_0000254987" description="Cytochrome b">
    <location>
        <begin position="1"/>
        <end position="381"/>
    </location>
</feature>
<feature type="transmembrane region" description="Helical" evidence="2">
    <location>
        <begin position="33"/>
        <end position="53"/>
    </location>
</feature>
<feature type="transmembrane region" description="Helical" evidence="2">
    <location>
        <begin position="77"/>
        <end position="98"/>
    </location>
</feature>
<feature type="transmembrane region" description="Helical" evidence="2">
    <location>
        <begin position="113"/>
        <end position="133"/>
    </location>
</feature>
<feature type="transmembrane region" description="Helical" evidence="2">
    <location>
        <begin position="178"/>
        <end position="198"/>
    </location>
</feature>
<feature type="transmembrane region" description="Helical" evidence="2">
    <location>
        <begin position="226"/>
        <end position="246"/>
    </location>
</feature>
<feature type="transmembrane region" description="Helical" evidence="2">
    <location>
        <begin position="288"/>
        <end position="308"/>
    </location>
</feature>
<feature type="transmembrane region" description="Helical" evidence="2">
    <location>
        <begin position="320"/>
        <end position="340"/>
    </location>
</feature>
<feature type="transmembrane region" description="Helical" evidence="2">
    <location>
        <begin position="347"/>
        <end position="367"/>
    </location>
</feature>
<feature type="binding site" description="axial binding residue" evidence="2">
    <location>
        <position position="83"/>
    </location>
    <ligand>
        <name>heme b</name>
        <dbReference type="ChEBI" id="CHEBI:60344"/>
        <label>b562</label>
    </ligand>
    <ligandPart>
        <name>Fe</name>
        <dbReference type="ChEBI" id="CHEBI:18248"/>
    </ligandPart>
</feature>
<feature type="binding site" description="axial binding residue" evidence="2">
    <location>
        <position position="97"/>
    </location>
    <ligand>
        <name>heme b</name>
        <dbReference type="ChEBI" id="CHEBI:60344"/>
        <label>b566</label>
    </ligand>
    <ligandPart>
        <name>Fe</name>
        <dbReference type="ChEBI" id="CHEBI:18248"/>
    </ligandPart>
</feature>
<feature type="binding site" description="axial binding residue" evidence="2">
    <location>
        <position position="182"/>
    </location>
    <ligand>
        <name>heme b</name>
        <dbReference type="ChEBI" id="CHEBI:60344"/>
        <label>b562</label>
    </ligand>
    <ligandPart>
        <name>Fe</name>
        <dbReference type="ChEBI" id="CHEBI:18248"/>
    </ligandPart>
</feature>
<feature type="binding site" description="axial binding residue" evidence="2">
    <location>
        <position position="196"/>
    </location>
    <ligand>
        <name>heme b</name>
        <dbReference type="ChEBI" id="CHEBI:60344"/>
        <label>b566</label>
    </ligand>
    <ligandPart>
        <name>Fe</name>
        <dbReference type="ChEBI" id="CHEBI:18248"/>
    </ligandPart>
</feature>
<feature type="binding site" evidence="2">
    <location>
        <position position="201"/>
    </location>
    <ligand>
        <name>a ubiquinone</name>
        <dbReference type="ChEBI" id="CHEBI:16389"/>
    </ligand>
</feature>